<sequence>MNCYKTHTCNELRKNDVEKEVTLSGWLYRKRDHGNLIFVDLRDFYGITQLVFNNDKDFFDEISNLKLESVITVTGIVEARTEDTVNSSISTGEIEVIVNNLRVESEVEFHFDEEIAKEERSILASITGEQEYPENMRFKYRFLDLRREKVRNNIILRSQIIAELRKLMIERGFLEIQTPILTASSPEGARDYLVPSRLNPGKFYALPQAPQIFKQLLMVSGFDKYFQIAPCFRDEDARADRSPGEFYQLDLEMSFVTQEDIFQIIESTLYRVFAKFSRKSVDKDFPRITYKEAMLKYGSDKPDLRNPLLISDVTEIFRDSGFNIFKSNIERGMVVRAIPAPKTAEEPRSFFDKKIEHAQKEFGAKGLGYITFDKDGTAKGPIAKFLDENRLNHIREATNIEPGDSVFFASDKENEAANIAGKVRTLLGSELSLIDDNIFKFCWIIDFPYFVYDDKSKKIDFFHNPFSMPHGGLKDLEDKNPLDILAYQYDLVCNGIELSSGAIRNNKLDIMYKAFAIAGYSRGEVDTRFGALVRAFRFGVPPHGGIAPGVDRIVMLLADEPNIREVICFPMNQQGEDVLMGAPSKVEDKHLRELSLKVIE</sequence>
<comment type="function">
    <text evidence="1">Aspartyl-tRNA synthetase with relaxed tRNA specificity since it is able to aspartylate not only its cognate tRNA(Asp) but also tRNA(Asn). Reaction proceeds in two steps: L-aspartate is first activated by ATP to form Asp-AMP and then transferred to the acceptor end of tRNA(Asp/Asn).</text>
</comment>
<comment type="catalytic activity">
    <reaction evidence="1">
        <text>tRNA(Asx) + L-aspartate + ATP = L-aspartyl-tRNA(Asx) + AMP + diphosphate</text>
        <dbReference type="Rhea" id="RHEA:18349"/>
        <dbReference type="Rhea" id="RHEA-COMP:9710"/>
        <dbReference type="Rhea" id="RHEA-COMP:9711"/>
        <dbReference type="ChEBI" id="CHEBI:29991"/>
        <dbReference type="ChEBI" id="CHEBI:30616"/>
        <dbReference type="ChEBI" id="CHEBI:33019"/>
        <dbReference type="ChEBI" id="CHEBI:78442"/>
        <dbReference type="ChEBI" id="CHEBI:78516"/>
        <dbReference type="ChEBI" id="CHEBI:456215"/>
        <dbReference type="EC" id="6.1.1.23"/>
    </reaction>
</comment>
<comment type="subunit">
    <text evidence="1">Homodimer.</text>
</comment>
<comment type="subcellular location">
    <subcellularLocation>
        <location evidence="1">Cytoplasm</location>
    </subcellularLocation>
</comment>
<comment type="similarity">
    <text evidence="1">Belongs to the class-II aminoacyl-tRNA synthetase family. Type 1 subfamily.</text>
</comment>
<feature type="chain" id="PRO_1000199026" description="Aspartate--tRNA(Asp/Asn) ligase">
    <location>
        <begin position="1"/>
        <end position="600"/>
    </location>
</feature>
<feature type="region of interest" description="Aspartate" evidence="1">
    <location>
        <begin position="211"/>
        <end position="214"/>
    </location>
</feature>
<feature type="binding site" evidence="1">
    <location>
        <position position="187"/>
    </location>
    <ligand>
        <name>L-aspartate</name>
        <dbReference type="ChEBI" id="CHEBI:29991"/>
    </ligand>
</feature>
<feature type="binding site" evidence="1">
    <location>
        <begin position="233"/>
        <end position="235"/>
    </location>
    <ligand>
        <name>ATP</name>
        <dbReference type="ChEBI" id="CHEBI:30616"/>
    </ligand>
</feature>
<feature type="binding site" evidence="1">
    <location>
        <position position="233"/>
    </location>
    <ligand>
        <name>L-aspartate</name>
        <dbReference type="ChEBI" id="CHEBI:29991"/>
    </ligand>
</feature>
<feature type="binding site" evidence="1">
    <location>
        <position position="463"/>
    </location>
    <ligand>
        <name>L-aspartate</name>
        <dbReference type="ChEBI" id="CHEBI:29991"/>
    </ligand>
</feature>
<feature type="binding site" evidence="1">
    <location>
        <position position="497"/>
    </location>
    <ligand>
        <name>ATP</name>
        <dbReference type="ChEBI" id="CHEBI:30616"/>
    </ligand>
</feature>
<feature type="binding site" evidence="1">
    <location>
        <position position="504"/>
    </location>
    <ligand>
        <name>L-aspartate</name>
        <dbReference type="ChEBI" id="CHEBI:29991"/>
    </ligand>
</feature>
<feature type="binding site" evidence="1">
    <location>
        <begin position="549"/>
        <end position="552"/>
    </location>
    <ligand>
        <name>ATP</name>
        <dbReference type="ChEBI" id="CHEBI:30616"/>
    </ligand>
</feature>
<feature type="site" description="Important for tRNA non-discrimination" evidence="1">
    <location>
        <position position="33"/>
    </location>
</feature>
<gene>
    <name evidence="1" type="primary">aspS</name>
    <name type="ordered locus">WRi_003280</name>
</gene>
<protein>
    <recommendedName>
        <fullName evidence="1">Aspartate--tRNA(Asp/Asn) ligase</fullName>
        <ecNumber evidence="1">6.1.1.23</ecNumber>
    </recommendedName>
    <alternativeName>
        <fullName evidence="1">Aspartyl-tRNA synthetase</fullName>
        <shortName evidence="1">AspRS</shortName>
    </alternativeName>
    <alternativeName>
        <fullName evidence="1">Non-discriminating aspartyl-tRNA synthetase</fullName>
        <shortName evidence="1">ND-AspRS</shortName>
    </alternativeName>
</protein>
<evidence type="ECO:0000255" key="1">
    <source>
        <dbReference type="HAMAP-Rule" id="MF_00044"/>
    </source>
</evidence>
<accession>C0R2K4</accession>
<dbReference type="EC" id="6.1.1.23" evidence="1"/>
<dbReference type="EMBL" id="CP001391">
    <property type="protein sequence ID" value="ACN95146.1"/>
    <property type="molecule type" value="Genomic_DNA"/>
</dbReference>
<dbReference type="RefSeq" id="WP_007548818.1">
    <property type="nucleotide sequence ID" value="NZ_MKIF01000163.1"/>
</dbReference>
<dbReference type="SMR" id="C0R2K4"/>
<dbReference type="STRING" id="66084.WRi_003280"/>
<dbReference type="KEGG" id="wri:WRi_003280"/>
<dbReference type="HOGENOM" id="CLU_014330_3_2_5"/>
<dbReference type="Proteomes" id="UP000001293">
    <property type="component" value="Chromosome"/>
</dbReference>
<dbReference type="GO" id="GO:0005737">
    <property type="term" value="C:cytoplasm"/>
    <property type="evidence" value="ECO:0007669"/>
    <property type="project" value="UniProtKB-SubCell"/>
</dbReference>
<dbReference type="GO" id="GO:0004815">
    <property type="term" value="F:aspartate-tRNA ligase activity"/>
    <property type="evidence" value="ECO:0007669"/>
    <property type="project" value="UniProtKB-UniRule"/>
</dbReference>
<dbReference type="GO" id="GO:0050560">
    <property type="term" value="F:aspartate-tRNA(Asn) ligase activity"/>
    <property type="evidence" value="ECO:0007669"/>
    <property type="project" value="UniProtKB-EC"/>
</dbReference>
<dbReference type="GO" id="GO:0005524">
    <property type="term" value="F:ATP binding"/>
    <property type="evidence" value="ECO:0007669"/>
    <property type="project" value="UniProtKB-UniRule"/>
</dbReference>
<dbReference type="GO" id="GO:0003676">
    <property type="term" value="F:nucleic acid binding"/>
    <property type="evidence" value="ECO:0007669"/>
    <property type="project" value="InterPro"/>
</dbReference>
<dbReference type="GO" id="GO:0006422">
    <property type="term" value="P:aspartyl-tRNA aminoacylation"/>
    <property type="evidence" value="ECO:0007669"/>
    <property type="project" value="UniProtKB-UniRule"/>
</dbReference>
<dbReference type="CDD" id="cd00777">
    <property type="entry name" value="AspRS_core"/>
    <property type="match status" value="1"/>
</dbReference>
<dbReference type="CDD" id="cd04317">
    <property type="entry name" value="EcAspRS_like_N"/>
    <property type="match status" value="1"/>
</dbReference>
<dbReference type="Gene3D" id="3.30.930.10">
    <property type="entry name" value="Bira Bifunctional Protein, Domain 2"/>
    <property type="match status" value="1"/>
</dbReference>
<dbReference type="Gene3D" id="3.30.1360.30">
    <property type="entry name" value="GAD-like domain"/>
    <property type="match status" value="1"/>
</dbReference>
<dbReference type="Gene3D" id="2.40.50.140">
    <property type="entry name" value="Nucleic acid-binding proteins"/>
    <property type="match status" value="1"/>
</dbReference>
<dbReference type="HAMAP" id="MF_00044">
    <property type="entry name" value="Asp_tRNA_synth_type1"/>
    <property type="match status" value="1"/>
</dbReference>
<dbReference type="InterPro" id="IPR004364">
    <property type="entry name" value="Aa-tRNA-synt_II"/>
</dbReference>
<dbReference type="InterPro" id="IPR006195">
    <property type="entry name" value="aa-tRNA-synth_II"/>
</dbReference>
<dbReference type="InterPro" id="IPR045864">
    <property type="entry name" value="aa-tRNA-synth_II/BPL/LPL"/>
</dbReference>
<dbReference type="InterPro" id="IPR004524">
    <property type="entry name" value="Asp-tRNA-ligase_1"/>
</dbReference>
<dbReference type="InterPro" id="IPR047089">
    <property type="entry name" value="Asp-tRNA-ligase_1_N"/>
</dbReference>
<dbReference type="InterPro" id="IPR002312">
    <property type="entry name" value="Asp/Asn-tRNA-synth_IIb"/>
</dbReference>
<dbReference type="InterPro" id="IPR047090">
    <property type="entry name" value="AspRS_core"/>
</dbReference>
<dbReference type="InterPro" id="IPR004115">
    <property type="entry name" value="GAD-like_sf"/>
</dbReference>
<dbReference type="InterPro" id="IPR029351">
    <property type="entry name" value="GAD_dom"/>
</dbReference>
<dbReference type="InterPro" id="IPR012340">
    <property type="entry name" value="NA-bd_OB-fold"/>
</dbReference>
<dbReference type="InterPro" id="IPR004365">
    <property type="entry name" value="NA-bd_OB_tRNA"/>
</dbReference>
<dbReference type="NCBIfam" id="TIGR00459">
    <property type="entry name" value="aspS_bact"/>
    <property type="match status" value="1"/>
</dbReference>
<dbReference type="NCBIfam" id="NF001750">
    <property type="entry name" value="PRK00476.1"/>
    <property type="match status" value="1"/>
</dbReference>
<dbReference type="PANTHER" id="PTHR22594:SF5">
    <property type="entry name" value="ASPARTATE--TRNA LIGASE, MITOCHONDRIAL"/>
    <property type="match status" value="1"/>
</dbReference>
<dbReference type="PANTHER" id="PTHR22594">
    <property type="entry name" value="ASPARTYL/LYSYL-TRNA SYNTHETASE"/>
    <property type="match status" value="1"/>
</dbReference>
<dbReference type="Pfam" id="PF02938">
    <property type="entry name" value="GAD"/>
    <property type="match status" value="1"/>
</dbReference>
<dbReference type="Pfam" id="PF00152">
    <property type="entry name" value="tRNA-synt_2"/>
    <property type="match status" value="1"/>
</dbReference>
<dbReference type="Pfam" id="PF01336">
    <property type="entry name" value="tRNA_anti-codon"/>
    <property type="match status" value="1"/>
</dbReference>
<dbReference type="PRINTS" id="PR01042">
    <property type="entry name" value="TRNASYNTHASP"/>
</dbReference>
<dbReference type="SUPFAM" id="SSF55681">
    <property type="entry name" value="Class II aaRS and biotin synthetases"/>
    <property type="match status" value="1"/>
</dbReference>
<dbReference type="SUPFAM" id="SSF55261">
    <property type="entry name" value="GAD domain-like"/>
    <property type="match status" value="1"/>
</dbReference>
<dbReference type="SUPFAM" id="SSF50249">
    <property type="entry name" value="Nucleic acid-binding proteins"/>
    <property type="match status" value="1"/>
</dbReference>
<dbReference type="PROSITE" id="PS50862">
    <property type="entry name" value="AA_TRNA_LIGASE_II"/>
    <property type="match status" value="1"/>
</dbReference>
<reference key="1">
    <citation type="journal article" date="2009" name="Proc. Natl. Acad. Sci. U.S.A.">
        <title>The mosaic genome structure of the Wolbachia wRi strain infecting Drosophila simulans.</title>
        <authorList>
            <person name="Klasson L."/>
            <person name="Westberg J."/>
            <person name="Sapountzis P."/>
            <person name="Naeslund K."/>
            <person name="Lutnaes Y."/>
            <person name="Darby A.C."/>
            <person name="Veneti Z."/>
            <person name="Chen L."/>
            <person name="Braig H.R."/>
            <person name="Garrett R."/>
            <person name="Bourtzis K."/>
            <person name="Andersson S.G."/>
        </authorList>
    </citation>
    <scope>NUCLEOTIDE SEQUENCE [LARGE SCALE GENOMIC DNA]</scope>
    <source>
        <strain>wRi</strain>
    </source>
</reference>
<organism>
    <name type="scientific">Wolbachia sp. subsp. Drosophila simulans (strain wRi)</name>
    <dbReference type="NCBI Taxonomy" id="66084"/>
    <lineage>
        <taxon>Bacteria</taxon>
        <taxon>Pseudomonadati</taxon>
        <taxon>Pseudomonadota</taxon>
        <taxon>Alphaproteobacteria</taxon>
        <taxon>Rickettsiales</taxon>
        <taxon>Anaplasmataceae</taxon>
        <taxon>Wolbachieae</taxon>
        <taxon>Wolbachia</taxon>
    </lineage>
</organism>
<keyword id="KW-0030">Aminoacyl-tRNA synthetase</keyword>
<keyword id="KW-0067">ATP-binding</keyword>
<keyword id="KW-0963">Cytoplasm</keyword>
<keyword id="KW-0436">Ligase</keyword>
<keyword id="KW-0547">Nucleotide-binding</keyword>
<keyword id="KW-0648">Protein biosynthesis</keyword>
<proteinExistence type="inferred from homology"/>
<name>SYDND_WOLWR</name>